<sequence>MREYKIVVLGSGGVGKSALTVQFVQCIFVEKYDPTIEDSYRKQVEVDGQQCMLEILDTAGTEQFTAMRDLYMKNGQGFVLVYSITAQSTFNDLQDLREQILRVKDTDDVPMVLVGNKCDLEEERVVGKELGKNLATQFNCAFMETSAKAKVNVNDIFYDLVRQINKKSPEKKQKKPKKSLCVLL</sequence>
<name>RAP1_DROME</name>
<accession>P08645</accession>
<accession>Q2XYB6</accession>
<accession>Q540V3</accession>
<accession>Q9V3N0</accession>
<organism>
    <name type="scientific">Drosophila melanogaster</name>
    <name type="common">Fruit fly</name>
    <dbReference type="NCBI Taxonomy" id="7227"/>
    <lineage>
        <taxon>Eukaryota</taxon>
        <taxon>Metazoa</taxon>
        <taxon>Ecdysozoa</taxon>
        <taxon>Arthropoda</taxon>
        <taxon>Hexapoda</taxon>
        <taxon>Insecta</taxon>
        <taxon>Pterygota</taxon>
        <taxon>Neoptera</taxon>
        <taxon>Endopterygota</taxon>
        <taxon>Diptera</taxon>
        <taxon>Brachycera</taxon>
        <taxon>Muscomorpha</taxon>
        <taxon>Ephydroidea</taxon>
        <taxon>Drosophilidae</taxon>
        <taxon>Drosophila</taxon>
        <taxon>Sophophora</taxon>
    </lineage>
</organism>
<protein>
    <recommendedName>
        <fullName evidence="7">Ras-related protein Rap1</fullName>
        <ecNumber evidence="2">3.6.5.2</ecNumber>
    </recommendedName>
    <alternativeName>
        <fullName evidence="7">Rap1 GTPase</fullName>
    </alternativeName>
    <alternativeName>
        <fullName evidence="5">Ras-like protein 3</fullName>
    </alternativeName>
</protein>
<feature type="chain" id="PRO_0000030191" description="Ras-related protein Rap1">
    <location>
        <begin position="1"/>
        <end position="181"/>
    </location>
</feature>
<feature type="propeptide" id="PRO_0000030192" description="Removed in mature form" evidence="1">
    <location>
        <begin position="182"/>
        <end position="184"/>
    </location>
</feature>
<feature type="short sequence motif" description="Effector region">
    <location>
        <begin position="32"/>
        <end position="40"/>
    </location>
</feature>
<feature type="binding site" evidence="1">
    <location>
        <begin position="10"/>
        <end position="17"/>
    </location>
    <ligand>
        <name>GTP</name>
        <dbReference type="ChEBI" id="CHEBI:37565"/>
    </ligand>
</feature>
<feature type="binding site" evidence="1">
    <location>
        <begin position="57"/>
        <end position="61"/>
    </location>
    <ligand>
        <name>GTP</name>
        <dbReference type="ChEBI" id="CHEBI:37565"/>
    </ligand>
</feature>
<feature type="binding site" evidence="1">
    <location>
        <begin position="116"/>
        <end position="119"/>
    </location>
    <ligand>
        <name>GTP</name>
        <dbReference type="ChEBI" id="CHEBI:37565"/>
    </ligand>
</feature>
<feature type="modified residue" description="Cysteine methyl ester" evidence="1">
    <location>
        <position position="181"/>
    </location>
</feature>
<feature type="lipid moiety-binding region" description="S-geranylgeranyl cysteine" evidence="1">
    <location>
        <position position="181"/>
    </location>
</feature>
<feature type="sequence variant" description="In roughened mutants.">
    <original>F</original>
    <variation>L</variation>
    <location>
        <position position="157"/>
    </location>
</feature>
<feature type="sequence conflict" description="In Ref. 1; CAA26131." evidence="6" ref="1">
    <original>EVDGQ</original>
    <variation>KVNER</variation>
    <location>
        <begin position="45"/>
        <end position="49"/>
    </location>
</feature>
<feature type="sequence conflict" description="In Ref. 1; CAA26131." evidence="6" ref="1">
    <original>LD</original>
    <variation>VN</variation>
    <location>
        <begin position="56"/>
        <end position="57"/>
    </location>
</feature>
<feature type="sequence conflict" description="In Ref. 1; CAA26131." evidence="6" ref="1">
    <original>D</original>
    <variation>N</variation>
    <location>
        <position position="69"/>
    </location>
</feature>
<keyword id="KW-1003">Cell membrane</keyword>
<keyword id="KW-0342">GTP-binding</keyword>
<keyword id="KW-0378">Hydrolase</keyword>
<keyword id="KW-0449">Lipoprotein</keyword>
<keyword id="KW-0472">Membrane</keyword>
<keyword id="KW-0488">Methylation</keyword>
<keyword id="KW-0547">Nucleotide-binding</keyword>
<keyword id="KW-0636">Prenylation</keyword>
<keyword id="KW-1185">Reference proteome</keyword>
<keyword id="KW-0716">Sensory transduction</keyword>
<keyword id="KW-0844">Vision</keyword>
<dbReference type="EC" id="3.6.5.2" evidence="2"/>
<dbReference type="EMBL" id="X02200">
    <property type="protein sequence ID" value="CAA26131.1"/>
    <property type="status" value="ALT_FRAME"/>
    <property type="molecule type" value="Genomic_DNA"/>
</dbReference>
<dbReference type="EMBL" id="M80535">
    <property type="protein sequence ID" value="AAA28845.1"/>
    <property type="molecule type" value="Genomic_DNA"/>
</dbReference>
<dbReference type="EMBL" id="AF186654">
    <property type="protein sequence ID" value="AAF15520.1"/>
    <property type="molecule type" value="Genomic_DNA"/>
</dbReference>
<dbReference type="EMBL" id="AE014296">
    <property type="protein sequence ID" value="AAF47583.1"/>
    <property type="molecule type" value="Genomic_DNA"/>
</dbReference>
<dbReference type="EMBL" id="AY121688">
    <property type="protein sequence ID" value="AAM52015.1"/>
    <property type="molecule type" value="mRNA"/>
</dbReference>
<dbReference type="EMBL" id="DQ138746">
    <property type="protein sequence ID" value="ABA86352.1"/>
    <property type="molecule type" value="Genomic_DNA"/>
</dbReference>
<dbReference type="PIR" id="A41217">
    <property type="entry name" value="A41217"/>
</dbReference>
<dbReference type="PIR" id="S07187">
    <property type="entry name" value="TVFFR3"/>
</dbReference>
<dbReference type="RefSeq" id="NP_001189023.1">
    <property type="nucleotide sequence ID" value="NM_001202094.2"/>
</dbReference>
<dbReference type="RefSeq" id="NP_001261295.1">
    <property type="nucleotide sequence ID" value="NM_001274366.1"/>
</dbReference>
<dbReference type="RefSeq" id="NP_476857.1">
    <property type="nucleotide sequence ID" value="NM_057509.5"/>
</dbReference>
<dbReference type="SMR" id="P08645"/>
<dbReference type="BioGRID" id="63773">
    <property type="interactions" value="49"/>
</dbReference>
<dbReference type="FunCoup" id="P08645">
    <property type="interactions" value="1713"/>
</dbReference>
<dbReference type="IntAct" id="P08645">
    <property type="interactions" value="17"/>
</dbReference>
<dbReference type="STRING" id="7227.FBpp0292253"/>
<dbReference type="PaxDb" id="7227-FBpp0072746"/>
<dbReference type="EnsemblMetazoa" id="FBtr0072867">
    <property type="protein sequence ID" value="FBpp0072746"/>
    <property type="gene ID" value="FBgn0004636"/>
</dbReference>
<dbReference type="EnsemblMetazoa" id="FBtr0303154">
    <property type="protein sequence ID" value="FBpp0292253"/>
    <property type="gene ID" value="FBgn0004636"/>
</dbReference>
<dbReference type="EnsemblMetazoa" id="FBtr0332671">
    <property type="protein sequence ID" value="FBpp0304917"/>
    <property type="gene ID" value="FBgn0004636"/>
</dbReference>
<dbReference type="GeneID" id="38244"/>
<dbReference type="KEGG" id="dme:Dmel_CG1956"/>
<dbReference type="AGR" id="FB:FBgn0004636"/>
<dbReference type="CTD" id="38244"/>
<dbReference type="FlyBase" id="FBgn0004636">
    <property type="gene designation" value="Rap1"/>
</dbReference>
<dbReference type="VEuPathDB" id="VectorBase:FBgn0004636"/>
<dbReference type="eggNOG" id="KOG0395">
    <property type="taxonomic scope" value="Eukaryota"/>
</dbReference>
<dbReference type="GeneTree" id="ENSGT00940000164058"/>
<dbReference type="HOGENOM" id="CLU_041217_9_8_1"/>
<dbReference type="InParanoid" id="P08645"/>
<dbReference type="OMA" id="DCAHEYV"/>
<dbReference type="OrthoDB" id="5976022at2759"/>
<dbReference type="PhylomeDB" id="P08645"/>
<dbReference type="BRENDA" id="3.6.5.2">
    <property type="organism ID" value="1994"/>
</dbReference>
<dbReference type="Reactome" id="R-DME-170968">
    <property type="pathway name" value="Frs2-mediated activation"/>
</dbReference>
<dbReference type="Reactome" id="R-DME-354192">
    <property type="pathway name" value="Integrin signaling"/>
</dbReference>
<dbReference type="Reactome" id="R-DME-381676">
    <property type="pathway name" value="Glucagon-like Peptide-1 (GLP1) regulates insulin secretion"/>
</dbReference>
<dbReference type="Reactome" id="R-DME-392517">
    <property type="pathway name" value="Rap1 signalling"/>
</dbReference>
<dbReference type="Reactome" id="R-DME-5674135">
    <property type="pathway name" value="MAP2K and MAPK activation"/>
</dbReference>
<dbReference type="Reactome" id="R-DME-6798695">
    <property type="pathway name" value="Neutrophil degranulation"/>
</dbReference>
<dbReference type="SignaLink" id="P08645"/>
<dbReference type="BioGRID-ORCS" id="38244">
    <property type="hits" value="0 hits in 3 CRISPR screens"/>
</dbReference>
<dbReference type="ChiTaRS" id="Rap1">
    <property type="organism name" value="fly"/>
</dbReference>
<dbReference type="GenomeRNAi" id="38244"/>
<dbReference type="PRO" id="PR:P08645"/>
<dbReference type="Proteomes" id="UP000000803">
    <property type="component" value="Chromosome 3L"/>
</dbReference>
<dbReference type="Bgee" id="FBgn0004636">
    <property type="expression patterns" value="Expressed in adult enteroendocrine precursor cell in adult midgut (Drosophila) and 287 other cell types or tissues"/>
</dbReference>
<dbReference type="ExpressionAtlas" id="P08645">
    <property type="expression patterns" value="baseline and differential"/>
</dbReference>
<dbReference type="GO" id="GO:0031252">
    <property type="term" value="C:cell leading edge"/>
    <property type="evidence" value="ECO:0000314"/>
    <property type="project" value="FlyBase"/>
</dbReference>
<dbReference type="GO" id="GO:0005829">
    <property type="term" value="C:cytosol"/>
    <property type="evidence" value="ECO:0000314"/>
    <property type="project" value="FlyBase"/>
</dbReference>
<dbReference type="GO" id="GO:0005634">
    <property type="term" value="C:nucleus"/>
    <property type="evidence" value="ECO:0000314"/>
    <property type="project" value="FlyBase"/>
</dbReference>
<dbReference type="GO" id="GO:0005886">
    <property type="term" value="C:plasma membrane"/>
    <property type="evidence" value="ECO:0007005"/>
    <property type="project" value="FlyBase"/>
</dbReference>
<dbReference type="GO" id="GO:0003925">
    <property type="term" value="F:G protein activity"/>
    <property type="evidence" value="ECO:0007669"/>
    <property type="project" value="UniProtKB-EC"/>
</dbReference>
<dbReference type="GO" id="GO:0019003">
    <property type="term" value="F:GDP binding"/>
    <property type="evidence" value="ECO:0000318"/>
    <property type="project" value="GO_Central"/>
</dbReference>
<dbReference type="GO" id="GO:0005525">
    <property type="term" value="F:GTP binding"/>
    <property type="evidence" value="ECO:0000318"/>
    <property type="project" value="GO_Central"/>
</dbReference>
<dbReference type="GO" id="GO:0003924">
    <property type="term" value="F:GTPase activity"/>
    <property type="evidence" value="ECO:0000314"/>
    <property type="project" value="FlyBase"/>
</dbReference>
<dbReference type="GO" id="GO:0019901">
    <property type="term" value="F:protein kinase binding"/>
    <property type="evidence" value="ECO:0000314"/>
    <property type="project" value="FlyBase"/>
</dbReference>
<dbReference type="GO" id="GO:0034333">
    <property type="term" value="P:adherens junction assembly"/>
    <property type="evidence" value="ECO:0000316"/>
    <property type="project" value="FlyBase"/>
</dbReference>
<dbReference type="GO" id="GO:0007298">
    <property type="term" value="P:border follicle cell migration"/>
    <property type="evidence" value="ECO:0000315"/>
    <property type="project" value="FlyBase"/>
</dbReference>
<dbReference type="GO" id="GO:0071320">
    <property type="term" value="P:cellular response to cAMP"/>
    <property type="evidence" value="ECO:0000318"/>
    <property type="project" value="GO_Central"/>
</dbReference>
<dbReference type="GO" id="GO:0007391">
    <property type="term" value="P:dorsal closure"/>
    <property type="evidence" value="ECO:0000315"/>
    <property type="project" value="FlyBase"/>
</dbReference>
<dbReference type="GO" id="GO:0030718">
    <property type="term" value="P:germ-line stem cell population maintenance"/>
    <property type="evidence" value="ECO:0000316"/>
    <property type="project" value="FlyBase"/>
</dbReference>
<dbReference type="GO" id="GO:0035099">
    <property type="term" value="P:hemocyte migration"/>
    <property type="evidence" value="ECO:0000315"/>
    <property type="project" value="FlyBase"/>
</dbReference>
<dbReference type="GO" id="GO:0035317">
    <property type="term" value="P:imaginal disc-derived wing hair organization"/>
    <property type="evidence" value="ECO:0000315"/>
    <property type="project" value="FlyBase"/>
</dbReference>
<dbReference type="GO" id="GO:0035331">
    <property type="term" value="P:negative regulation of hippo signaling"/>
    <property type="evidence" value="ECO:0000314"/>
    <property type="project" value="FlyBase"/>
</dbReference>
<dbReference type="GO" id="GO:2000301">
    <property type="term" value="P:negative regulation of synaptic vesicle exocytosis"/>
    <property type="evidence" value="ECO:0000318"/>
    <property type="project" value="GO_Central"/>
</dbReference>
<dbReference type="GO" id="GO:0016318">
    <property type="term" value="P:ommatidial rotation"/>
    <property type="evidence" value="ECO:0000315"/>
    <property type="project" value="FlyBase"/>
</dbReference>
<dbReference type="GO" id="GO:0022409">
    <property type="term" value="P:positive regulation of cell-cell adhesion"/>
    <property type="evidence" value="ECO:0000315"/>
    <property type="project" value="FlyBase"/>
</dbReference>
<dbReference type="GO" id="GO:0070374">
    <property type="term" value="P:positive regulation of ERK1 and ERK2 cascade"/>
    <property type="evidence" value="ECO:0000315"/>
    <property type="project" value="FlyBase"/>
</dbReference>
<dbReference type="GO" id="GO:0045874">
    <property type="term" value="P:positive regulation of sevenless signaling pathway"/>
    <property type="evidence" value="ECO:0000316"/>
    <property type="project" value="FlyBase"/>
</dbReference>
<dbReference type="GO" id="GO:0045880">
    <property type="term" value="P:positive regulation of smoothened signaling pathway"/>
    <property type="evidence" value="ECO:0000314"/>
    <property type="project" value="FlyBase"/>
</dbReference>
<dbReference type="GO" id="GO:0007465">
    <property type="term" value="P:R7 cell fate commitment"/>
    <property type="evidence" value="ECO:0000315"/>
    <property type="project" value="FlyBase"/>
</dbReference>
<dbReference type="GO" id="GO:0032486">
    <property type="term" value="P:Rap protein signal transduction"/>
    <property type="evidence" value="ECO:0000314"/>
    <property type="project" value="FlyBase"/>
</dbReference>
<dbReference type="GO" id="GO:0016476">
    <property type="term" value="P:regulation of embryonic cell shape"/>
    <property type="evidence" value="ECO:0000315"/>
    <property type="project" value="FlyBase"/>
</dbReference>
<dbReference type="GO" id="GO:0006930">
    <property type="term" value="P:substrate-dependent cell migration, cell extension"/>
    <property type="evidence" value="ECO:0000315"/>
    <property type="project" value="FlyBase"/>
</dbReference>
<dbReference type="GO" id="GO:0008293">
    <property type="term" value="P:torso signaling pathway"/>
    <property type="evidence" value="ECO:0000315"/>
    <property type="project" value="FlyBase"/>
</dbReference>
<dbReference type="GO" id="GO:0007601">
    <property type="term" value="P:visual perception"/>
    <property type="evidence" value="ECO:0007669"/>
    <property type="project" value="UniProtKB-KW"/>
</dbReference>
<dbReference type="CDD" id="cd04175">
    <property type="entry name" value="Rap1"/>
    <property type="match status" value="1"/>
</dbReference>
<dbReference type="FunFam" id="3.40.50.300:FF:000182">
    <property type="entry name" value="ras-related protein Rap-1b"/>
    <property type="match status" value="1"/>
</dbReference>
<dbReference type="Gene3D" id="3.40.50.300">
    <property type="entry name" value="P-loop containing nucleotide triphosphate hydrolases"/>
    <property type="match status" value="1"/>
</dbReference>
<dbReference type="InterPro" id="IPR027417">
    <property type="entry name" value="P-loop_NTPase"/>
</dbReference>
<dbReference type="InterPro" id="IPR038851">
    <property type="entry name" value="Rap1"/>
</dbReference>
<dbReference type="InterPro" id="IPR005225">
    <property type="entry name" value="Small_GTP-bd"/>
</dbReference>
<dbReference type="InterPro" id="IPR001806">
    <property type="entry name" value="Small_GTPase"/>
</dbReference>
<dbReference type="InterPro" id="IPR020849">
    <property type="entry name" value="Small_GTPase_Ras-type"/>
</dbReference>
<dbReference type="NCBIfam" id="TIGR00231">
    <property type="entry name" value="small_GTP"/>
    <property type="match status" value="1"/>
</dbReference>
<dbReference type="PANTHER" id="PTHR24070">
    <property type="entry name" value="RAS, DI-RAS, AND RHEB FAMILY MEMBERS OF SMALL GTPASE SUPERFAMILY"/>
    <property type="match status" value="1"/>
</dbReference>
<dbReference type="Pfam" id="PF00071">
    <property type="entry name" value="Ras"/>
    <property type="match status" value="1"/>
</dbReference>
<dbReference type="PRINTS" id="PR00449">
    <property type="entry name" value="RASTRNSFRMNG"/>
</dbReference>
<dbReference type="SMART" id="SM00175">
    <property type="entry name" value="RAB"/>
    <property type="match status" value="1"/>
</dbReference>
<dbReference type="SMART" id="SM00176">
    <property type="entry name" value="RAN"/>
    <property type="match status" value="1"/>
</dbReference>
<dbReference type="SMART" id="SM00173">
    <property type="entry name" value="RAS"/>
    <property type="match status" value="1"/>
</dbReference>
<dbReference type="SMART" id="SM00174">
    <property type="entry name" value="RHO"/>
    <property type="match status" value="1"/>
</dbReference>
<dbReference type="SUPFAM" id="SSF52540">
    <property type="entry name" value="P-loop containing nucleoside triphosphate hydrolases"/>
    <property type="match status" value="1"/>
</dbReference>
<dbReference type="PROSITE" id="PS51421">
    <property type="entry name" value="RAS"/>
    <property type="match status" value="1"/>
</dbReference>
<reference key="1">
    <citation type="journal article" date="1985" name="EMBO J.">
        <title>Characterization of functional domains of p21 ras by use of chimeric genes.</title>
        <authorList>
            <person name="Schejter E.D."/>
            <person name="Shilo B.-Z."/>
        </authorList>
    </citation>
    <scope>NUCLEOTIDE SEQUENCE [GENOMIC DNA]</scope>
</reference>
<reference key="2">
    <citation type="journal article" date="1991" name="Cell">
        <title>The Drosophila roughened mutation: activation of a rap homolog disrupts eye development and interferes with cell determination.</title>
        <authorList>
            <person name="Hariharan I.K."/>
            <person name="Carthew R.W."/>
            <person name="Rubin G.M."/>
        </authorList>
    </citation>
    <scope>NUCLEOTIDE SEQUENCE [GENOMIC DNA]</scope>
    <scope>FUNCTION</scope>
    <scope>DISRUPTION PHENOTYPE</scope>
</reference>
<reference key="3">
    <citation type="journal article" date="1999" name="J. Mol. Evol.">
        <title>Absence of protein polymorphism in the Ras genes of Drosophila melanogaster.</title>
        <authorList>
            <person name="Gasperini R."/>
            <person name="Gibson G."/>
        </authorList>
    </citation>
    <scope>NUCLEOTIDE SEQUENCE [GENOMIC DNA]</scope>
    <source>
        <strain>A1</strain>
    </source>
</reference>
<reference key="4">
    <citation type="journal article" date="2000" name="Science">
        <title>The genome sequence of Drosophila melanogaster.</title>
        <authorList>
            <person name="Adams M.D."/>
            <person name="Celniker S.E."/>
            <person name="Holt R.A."/>
            <person name="Evans C.A."/>
            <person name="Gocayne J.D."/>
            <person name="Amanatides P.G."/>
            <person name="Scherer S.E."/>
            <person name="Li P.W."/>
            <person name="Hoskins R.A."/>
            <person name="Galle R.F."/>
            <person name="George R.A."/>
            <person name="Lewis S.E."/>
            <person name="Richards S."/>
            <person name="Ashburner M."/>
            <person name="Henderson S.N."/>
            <person name="Sutton G.G."/>
            <person name="Wortman J.R."/>
            <person name="Yandell M.D."/>
            <person name="Zhang Q."/>
            <person name="Chen L.X."/>
            <person name="Brandon R.C."/>
            <person name="Rogers Y.-H.C."/>
            <person name="Blazej R.G."/>
            <person name="Champe M."/>
            <person name="Pfeiffer B.D."/>
            <person name="Wan K.H."/>
            <person name="Doyle C."/>
            <person name="Baxter E.G."/>
            <person name="Helt G."/>
            <person name="Nelson C.R."/>
            <person name="Miklos G.L.G."/>
            <person name="Abril J.F."/>
            <person name="Agbayani A."/>
            <person name="An H.-J."/>
            <person name="Andrews-Pfannkoch C."/>
            <person name="Baldwin D."/>
            <person name="Ballew R.M."/>
            <person name="Basu A."/>
            <person name="Baxendale J."/>
            <person name="Bayraktaroglu L."/>
            <person name="Beasley E.M."/>
            <person name="Beeson K.Y."/>
            <person name="Benos P.V."/>
            <person name="Berman B.P."/>
            <person name="Bhandari D."/>
            <person name="Bolshakov S."/>
            <person name="Borkova D."/>
            <person name="Botchan M.R."/>
            <person name="Bouck J."/>
            <person name="Brokstein P."/>
            <person name="Brottier P."/>
            <person name="Burtis K.C."/>
            <person name="Busam D.A."/>
            <person name="Butler H."/>
            <person name="Cadieu E."/>
            <person name="Center A."/>
            <person name="Chandra I."/>
            <person name="Cherry J.M."/>
            <person name="Cawley S."/>
            <person name="Dahlke C."/>
            <person name="Davenport L.B."/>
            <person name="Davies P."/>
            <person name="de Pablos B."/>
            <person name="Delcher A."/>
            <person name="Deng Z."/>
            <person name="Mays A.D."/>
            <person name="Dew I."/>
            <person name="Dietz S.M."/>
            <person name="Dodson K."/>
            <person name="Doup L.E."/>
            <person name="Downes M."/>
            <person name="Dugan-Rocha S."/>
            <person name="Dunkov B.C."/>
            <person name="Dunn P."/>
            <person name="Durbin K.J."/>
            <person name="Evangelista C.C."/>
            <person name="Ferraz C."/>
            <person name="Ferriera S."/>
            <person name="Fleischmann W."/>
            <person name="Fosler C."/>
            <person name="Gabrielian A.E."/>
            <person name="Garg N.S."/>
            <person name="Gelbart W.M."/>
            <person name="Glasser K."/>
            <person name="Glodek A."/>
            <person name="Gong F."/>
            <person name="Gorrell J.H."/>
            <person name="Gu Z."/>
            <person name="Guan P."/>
            <person name="Harris M."/>
            <person name="Harris N.L."/>
            <person name="Harvey D.A."/>
            <person name="Heiman T.J."/>
            <person name="Hernandez J.R."/>
            <person name="Houck J."/>
            <person name="Hostin D."/>
            <person name="Houston K.A."/>
            <person name="Howland T.J."/>
            <person name="Wei M.-H."/>
            <person name="Ibegwam C."/>
            <person name="Jalali M."/>
            <person name="Kalush F."/>
            <person name="Karpen G.H."/>
            <person name="Ke Z."/>
            <person name="Kennison J.A."/>
            <person name="Ketchum K.A."/>
            <person name="Kimmel B.E."/>
            <person name="Kodira C.D."/>
            <person name="Kraft C.L."/>
            <person name="Kravitz S."/>
            <person name="Kulp D."/>
            <person name="Lai Z."/>
            <person name="Lasko P."/>
            <person name="Lei Y."/>
            <person name="Levitsky A.A."/>
            <person name="Li J.H."/>
            <person name="Li Z."/>
            <person name="Liang Y."/>
            <person name="Lin X."/>
            <person name="Liu X."/>
            <person name="Mattei B."/>
            <person name="McIntosh T.C."/>
            <person name="McLeod M.P."/>
            <person name="McPherson D."/>
            <person name="Merkulov G."/>
            <person name="Milshina N.V."/>
            <person name="Mobarry C."/>
            <person name="Morris J."/>
            <person name="Moshrefi A."/>
            <person name="Mount S.M."/>
            <person name="Moy M."/>
            <person name="Murphy B."/>
            <person name="Murphy L."/>
            <person name="Muzny D.M."/>
            <person name="Nelson D.L."/>
            <person name="Nelson D.R."/>
            <person name="Nelson K.A."/>
            <person name="Nixon K."/>
            <person name="Nusskern D.R."/>
            <person name="Pacleb J.M."/>
            <person name="Palazzolo M."/>
            <person name="Pittman G.S."/>
            <person name="Pan S."/>
            <person name="Pollard J."/>
            <person name="Puri V."/>
            <person name="Reese M.G."/>
            <person name="Reinert K."/>
            <person name="Remington K."/>
            <person name="Saunders R.D.C."/>
            <person name="Scheeler F."/>
            <person name="Shen H."/>
            <person name="Shue B.C."/>
            <person name="Siden-Kiamos I."/>
            <person name="Simpson M."/>
            <person name="Skupski M.P."/>
            <person name="Smith T.J."/>
            <person name="Spier E."/>
            <person name="Spradling A.C."/>
            <person name="Stapleton M."/>
            <person name="Strong R."/>
            <person name="Sun E."/>
            <person name="Svirskas R."/>
            <person name="Tector C."/>
            <person name="Turner R."/>
            <person name="Venter E."/>
            <person name="Wang A.H."/>
            <person name="Wang X."/>
            <person name="Wang Z.-Y."/>
            <person name="Wassarman D.A."/>
            <person name="Weinstock G.M."/>
            <person name="Weissenbach J."/>
            <person name="Williams S.M."/>
            <person name="Woodage T."/>
            <person name="Worley K.C."/>
            <person name="Wu D."/>
            <person name="Yang S."/>
            <person name="Yao Q.A."/>
            <person name="Ye J."/>
            <person name="Yeh R.-F."/>
            <person name="Zaveri J.S."/>
            <person name="Zhan M."/>
            <person name="Zhang G."/>
            <person name="Zhao Q."/>
            <person name="Zheng L."/>
            <person name="Zheng X.H."/>
            <person name="Zhong F.N."/>
            <person name="Zhong W."/>
            <person name="Zhou X."/>
            <person name="Zhu S.C."/>
            <person name="Zhu X."/>
            <person name="Smith H.O."/>
            <person name="Gibbs R.A."/>
            <person name="Myers E.W."/>
            <person name="Rubin G.M."/>
            <person name="Venter J.C."/>
        </authorList>
    </citation>
    <scope>NUCLEOTIDE SEQUENCE [LARGE SCALE GENOMIC DNA]</scope>
    <source>
        <strain>Berkeley</strain>
    </source>
</reference>
<reference key="5">
    <citation type="journal article" date="2002" name="Genome Biol.">
        <title>Annotation of the Drosophila melanogaster euchromatic genome: a systematic review.</title>
        <authorList>
            <person name="Misra S."/>
            <person name="Crosby M.A."/>
            <person name="Mungall C.J."/>
            <person name="Matthews B.B."/>
            <person name="Campbell K.S."/>
            <person name="Hradecky P."/>
            <person name="Huang Y."/>
            <person name="Kaminker J.S."/>
            <person name="Millburn G.H."/>
            <person name="Prochnik S.E."/>
            <person name="Smith C.D."/>
            <person name="Tupy J.L."/>
            <person name="Whitfield E.J."/>
            <person name="Bayraktaroglu L."/>
            <person name="Berman B.P."/>
            <person name="Bettencourt B.R."/>
            <person name="Celniker S.E."/>
            <person name="de Grey A.D.N.J."/>
            <person name="Drysdale R.A."/>
            <person name="Harris N.L."/>
            <person name="Richter J."/>
            <person name="Russo S."/>
            <person name="Schroeder A.J."/>
            <person name="Shu S.Q."/>
            <person name="Stapleton M."/>
            <person name="Yamada C."/>
            <person name="Ashburner M."/>
            <person name="Gelbart W.M."/>
            <person name="Rubin G.M."/>
            <person name="Lewis S.E."/>
        </authorList>
    </citation>
    <scope>GENOME REANNOTATION</scope>
    <source>
        <strain>Berkeley</strain>
    </source>
</reference>
<reference key="6">
    <citation type="journal article" date="2002" name="Genome Biol.">
        <title>A Drosophila full-length cDNA resource.</title>
        <authorList>
            <person name="Stapleton M."/>
            <person name="Carlson J.W."/>
            <person name="Brokstein P."/>
            <person name="Yu C."/>
            <person name="Champe M."/>
            <person name="George R.A."/>
            <person name="Guarin H."/>
            <person name="Kronmiller B."/>
            <person name="Pacleb J.M."/>
            <person name="Park S."/>
            <person name="Wan K.H."/>
            <person name="Rubin G.M."/>
            <person name="Celniker S.E."/>
        </authorList>
    </citation>
    <scope>NUCLEOTIDE SEQUENCE [LARGE SCALE MRNA]</scope>
    <source>
        <strain>Berkeley</strain>
        <tissue>Embryo</tissue>
    </source>
</reference>
<reference key="7">
    <citation type="journal article" date="2005" name="Mol. Biol. Evol.">
        <title>Intragenic Hill-Robertson interference influences selection intensity on synonymous mutations in Drosophila.</title>
        <authorList>
            <person name="Comeron J.M."/>
            <person name="Guthrie T.B."/>
        </authorList>
    </citation>
    <scope>NUCLEOTIDE SEQUENCE [GENOMIC DNA] OF 8-178</scope>
    <source>
        <strain>Ral1</strain>
    </source>
</reference>
<evidence type="ECO:0000250" key="1"/>
<evidence type="ECO:0000250" key="2">
    <source>
        <dbReference type="UniProtKB" id="P61224"/>
    </source>
</evidence>
<evidence type="ECO:0000269" key="3">
    <source>
    </source>
</evidence>
<evidence type="ECO:0000303" key="4">
    <source>
    </source>
</evidence>
<evidence type="ECO:0000303" key="5">
    <source>
    </source>
</evidence>
<evidence type="ECO:0000305" key="6"/>
<evidence type="ECO:0000312" key="7">
    <source>
        <dbReference type="FlyBase" id="FBgn0004636"/>
    </source>
</evidence>
<gene>
    <name evidence="7" type="primary">Rap1</name>
    <name evidence="7" type="synonym">R</name>
    <name evidence="4" type="synonym">RAP</name>
    <name evidence="5" type="synonym">ras3</name>
    <name evidence="7" type="ORF">CG1956</name>
</gene>
<proteinExistence type="evidence at transcript level"/>
<comment type="function">
    <text evidence="3">Ras proteins bind GDP/GTP and possess intrinsic GTPase activity. Plays a role in photoreceptor cell determination.</text>
</comment>
<comment type="catalytic activity">
    <reaction evidence="2">
        <text>GTP + H2O = GDP + phosphate + H(+)</text>
        <dbReference type="Rhea" id="RHEA:19669"/>
        <dbReference type="ChEBI" id="CHEBI:15377"/>
        <dbReference type="ChEBI" id="CHEBI:15378"/>
        <dbReference type="ChEBI" id="CHEBI:37565"/>
        <dbReference type="ChEBI" id="CHEBI:43474"/>
        <dbReference type="ChEBI" id="CHEBI:58189"/>
        <dbReference type="EC" id="3.6.5.2"/>
    </reaction>
</comment>
<comment type="activity regulation">
    <text>Alternates between an inactive form bound to GDP and an active form bound to GTP. Activated by a guanine nucleotide-exchange factor (GEF) and inactivated by a GTPase-activating protein (GAP).</text>
</comment>
<comment type="subcellular location">
    <subcellularLocation>
        <location evidence="6">Cell membrane</location>
        <topology evidence="6">Lipid-anchor</topology>
        <orientation evidence="6">Cytoplasmic side</orientation>
    </subcellularLocation>
</comment>
<comment type="disruption phenotype">
    <text evidence="3">Flies exhibit disruption of the early stages of photoreceptor cell determination, adult eyes lack the R7 cell.</text>
</comment>
<comment type="similarity">
    <text evidence="6">Belongs to the small GTPase superfamily. Ras family.</text>
</comment>
<comment type="sequence caution" evidence="6">
    <conflict type="frameshift">
        <sequence resource="EMBL-CDS" id="CAA26131"/>
    </conflict>
</comment>